<accession>B1IT04</accession>
<keyword id="KW-0687">Ribonucleoprotein</keyword>
<keyword id="KW-0689">Ribosomal protein</keyword>
<keyword id="KW-0694">RNA-binding</keyword>
<keyword id="KW-0699">rRNA-binding</keyword>
<dbReference type="EMBL" id="CP000946">
    <property type="protein sequence ID" value="ACA79415.1"/>
    <property type="molecule type" value="Genomic_DNA"/>
</dbReference>
<dbReference type="RefSeq" id="WP_000135199.1">
    <property type="nucleotide sequence ID" value="NZ_MTFT01000012.1"/>
</dbReference>
<dbReference type="SMR" id="B1IT04"/>
<dbReference type="GeneID" id="98186237"/>
<dbReference type="KEGG" id="ecl:EcolC_3811"/>
<dbReference type="HOGENOM" id="CLU_148710_2_3_6"/>
<dbReference type="GO" id="GO:0022627">
    <property type="term" value="C:cytosolic small ribosomal subunit"/>
    <property type="evidence" value="ECO:0007669"/>
    <property type="project" value="TreeGrafter"/>
</dbReference>
<dbReference type="GO" id="GO:0070181">
    <property type="term" value="F:small ribosomal subunit rRNA binding"/>
    <property type="evidence" value="ECO:0007669"/>
    <property type="project" value="TreeGrafter"/>
</dbReference>
<dbReference type="GO" id="GO:0003735">
    <property type="term" value="F:structural constituent of ribosome"/>
    <property type="evidence" value="ECO:0007669"/>
    <property type="project" value="InterPro"/>
</dbReference>
<dbReference type="GO" id="GO:0006412">
    <property type="term" value="P:translation"/>
    <property type="evidence" value="ECO:0007669"/>
    <property type="project" value="UniProtKB-UniRule"/>
</dbReference>
<dbReference type="FunFam" id="4.10.640.10:FF:000001">
    <property type="entry name" value="30S ribosomal protein S18"/>
    <property type="match status" value="1"/>
</dbReference>
<dbReference type="Gene3D" id="4.10.640.10">
    <property type="entry name" value="Ribosomal protein S18"/>
    <property type="match status" value="1"/>
</dbReference>
<dbReference type="HAMAP" id="MF_00270">
    <property type="entry name" value="Ribosomal_bS18"/>
    <property type="match status" value="1"/>
</dbReference>
<dbReference type="InterPro" id="IPR001648">
    <property type="entry name" value="Ribosomal_bS18"/>
</dbReference>
<dbReference type="InterPro" id="IPR018275">
    <property type="entry name" value="Ribosomal_bS18_CS"/>
</dbReference>
<dbReference type="InterPro" id="IPR036870">
    <property type="entry name" value="Ribosomal_bS18_sf"/>
</dbReference>
<dbReference type="NCBIfam" id="TIGR00165">
    <property type="entry name" value="S18"/>
    <property type="match status" value="1"/>
</dbReference>
<dbReference type="PANTHER" id="PTHR13479">
    <property type="entry name" value="30S RIBOSOMAL PROTEIN S18"/>
    <property type="match status" value="1"/>
</dbReference>
<dbReference type="PANTHER" id="PTHR13479:SF40">
    <property type="entry name" value="SMALL RIBOSOMAL SUBUNIT PROTEIN BS18M"/>
    <property type="match status" value="1"/>
</dbReference>
<dbReference type="Pfam" id="PF01084">
    <property type="entry name" value="Ribosomal_S18"/>
    <property type="match status" value="1"/>
</dbReference>
<dbReference type="PRINTS" id="PR00974">
    <property type="entry name" value="RIBOSOMALS18"/>
</dbReference>
<dbReference type="SUPFAM" id="SSF46911">
    <property type="entry name" value="Ribosomal protein S18"/>
    <property type="match status" value="1"/>
</dbReference>
<dbReference type="PROSITE" id="PS00057">
    <property type="entry name" value="RIBOSOMAL_S18"/>
    <property type="match status" value="1"/>
</dbReference>
<organism>
    <name type="scientific">Escherichia coli (strain ATCC 8739 / DSM 1576 / NBRC 3972 / NCIMB 8545 / WDCM 00012 / Crooks)</name>
    <dbReference type="NCBI Taxonomy" id="481805"/>
    <lineage>
        <taxon>Bacteria</taxon>
        <taxon>Pseudomonadati</taxon>
        <taxon>Pseudomonadota</taxon>
        <taxon>Gammaproteobacteria</taxon>
        <taxon>Enterobacterales</taxon>
        <taxon>Enterobacteriaceae</taxon>
        <taxon>Escherichia</taxon>
    </lineage>
</organism>
<comment type="function">
    <text evidence="1">Binds as a heterodimer with protein bS6 to the central domain of the 16S rRNA, where it helps stabilize the platform of the 30S subunit.</text>
</comment>
<comment type="subunit">
    <text evidence="1">Part of the 30S ribosomal subunit. Forms a tight heterodimer with protein bS6.</text>
</comment>
<comment type="similarity">
    <text evidence="1">Belongs to the bacterial ribosomal protein bS18 family.</text>
</comment>
<gene>
    <name evidence="1" type="primary">rpsR</name>
    <name type="ordered locus">EcolC_3811</name>
</gene>
<protein>
    <recommendedName>
        <fullName evidence="1">Small ribosomal subunit protein bS18</fullName>
    </recommendedName>
    <alternativeName>
        <fullName evidence="2">30S ribosomal protein S18</fullName>
    </alternativeName>
</protein>
<reference key="1">
    <citation type="submission" date="2008-02" db="EMBL/GenBank/DDBJ databases">
        <title>Complete sequence of Escherichia coli C str. ATCC 8739.</title>
        <authorList>
            <person name="Copeland A."/>
            <person name="Lucas S."/>
            <person name="Lapidus A."/>
            <person name="Glavina del Rio T."/>
            <person name="Dalin E."/>
            <person name="Tice H."/>
            <person name="Bruce D."/>
            <person name="Goodwin L."/>
            <person name="Pitluck S."/>
            <person name="Kiss H."/>
            <person name="Brettin T."/>
            <person name="Detter J.C."/>
            <person name="Han C."/>
            <person name="Kuske C.R."/>
            <person name="Schmutz J."/>
            <person name="Larimer F."/>
            <person name="Land M."/>
            <person name="Hauser L."/>
            <person name="Kyrpides N."/>
            <person name="Mikhailova N."/>
            <person name="Ingram L."/>
            <person name="Richardson P."/>
        </authorList>
    </citation>
    <scope>NUCLEOTIDE SEQUENCE [LARGE SCALE GENOMIC DNA]</scope>
    <source>
        <strain>ATCC 8739 / DSM 1576 / NBRC 3972 / NCIMB 8545 / WDCM 00012 / Crooks</strain>
    </source>
</reference>
<name>RS18_ECOLC</name>
<sequence>MARYFRRRKFCRFTAEGVQEIDYKDIATLKNYITESGKIVPSRITGTRAKYQRQLARAIKRARYLSLLPYTDRHQ</sequence>
<proteinExistence type="inferred from homology"/>
<feature type="chain" id="PRO_1000078701" description="Small ribosomal subunit protein bS18">
    <location>
        <begin position="1"/>
        <end position="75"/>
    </location>
</feature>
<evidence type="ECO:0000255" key="1">
    <source>
        <dbReference type="HAMAP-Rule" id="MF_00270"/>
    </source>
</evidence>
<evidence type="ECO:0000305" key="2"/>